<dbReference type="EMBL" id="AJ001007">
    <property type="protein sequence ID" value="CAA04464.1"/>
    <property type="molecule type" value="Genomic_DNA"/>
</dbReference>
<dbReference type="EMBL" id="AM406671">
    <property type="protein sequence ID" value="CAL98995.1"/>
    <property type="molecule type" value="Genomic_DNA"/>
</dbReference>
<dbReference type="RefSeq" id="WP_011836068.1">
    <property type="nucleotide sequence ID" value="NC_009004.1"/>
</dbReference>
<dbReference type="SMR" id="O86281"/>
<dbReference type="STRING" id="416870.llmg_2431"/>
<dbReference type="GeneID" id="61110479"/>
<dbReference type="KEGG" id="llm:llmg_2431"/>
<dbReference type="eggNOG" id="COG2706">
    <property type="taxonomic scope" value="Bacteria"/>
</dbReference>
<dbReference type="HOGENOM" id="CLU_038716_3_1_9"/>
<dbReference type="OrthoDB" id="9790815at2"/>
<dbReference type="PhylomeDB" id="O86281"/>
<dbReference type="Proteomes" id="UP000000364">
    <property type="component" value="Chromosome"/>
</dbReference>
<dbReference type="GO" id="GO:0005829">
    <property type="term" value="C:cytosol"/>
    <property type="evidence" value="ECO:0007669"/>
    <property type="project" value="TreeGrafter"/>
</dbReference>
<dbReference type="GO" id="GO:0017057">
    <property type="term" value="F:6-phosphogluconolactonase activity"/>
    <property type="evidence" value="ECO:0007669"/>
    <property type="project" value="TreeGrafter"/>
</dbReference>
<dbReference type="Gene3D" id="2.130.10.10">
    <property type="entry name" value="YVTN repeat-like/Quinoprotein amine dehydrogenase"/>
    <property type="match status" value="1"/>
</dbReference>
<dbReference type="InterPro" id="IPR050282">
    <property type="entry name" value="Cycloisomerase_2"/>
</dbReference>
<dbReference type="InterPro" id="IPR011048">
    <property type="entry name" value="Haem_d1_sf"/>
</dbReference>
<dbReference type="InterPro" id="IPR019405">
    <property type="entry name" value="Lactonase_7-beta_prop"/>
</dbReference>
<dbReference type="InterPro" id="IPR015943">
    <property type="entry name" value="WD40/YVTN_repeat-like_dom_sf"/>
</dbReference>
<dbReference type="PANTHER" id="PTHR30344:SF1">
    <property type="entry name" value="6-PHOSPHOGLUCONOLACTONASE"/>
    <property type="match status" value="1"/>
</dbReference>
<dbReference type="PANTHER" id="PTHR30344">
    <property type="entry name" value="6-PHOSPHOGLUCONOLACTONASE-RELATED"/>
    <property type="match status" value="1"/>
</dbReference>
<dbReference type="Pfam" id="PF10282">
    <property type="entry name" value="Lactonase"/>
    <property type="match status" value="1"/>
</dbReference>
<dbReference type="SUPFAM" id="SSF51004">
    <property type="entry name" value="C-terminal (heme d1) domain of cytochrome cd1-nitrite reductase"/>
    <property type="match status" value="1"/>
</dbReference>
<evidence type="ECO:0000256" key="1">
    <source>
        <dbReference type="SAM" id="MobiDB-lite"/>
    </source>
</evidence>
<evidence type="ECO:0000305" key="2"/>
<accession>O86281</accession>
<accession>A2RNV1</accession>
<gene>
    <name type="ordered locus">llmg_2431</name>
</gene>
<protein>
    <recommendedName>
        <fullName>Uncharacterized protein llmg_2431</fullName>
    </recommendedName>
    <alternativeName>
        <fullName>ORFB</fullName>
    </alternativeName>
</protein>
<comment type="similarity">
    <text evidence="2">Belongs to the cycloisomerase 2 family.</text>
</comment>
<proteinExistence type="inferred from homology"/>
<feature type="chain" id="PRO_0000171146" description="Uncharacterized protein llmg_2431">
    <location>
        <begin position="1"/>
        <end position="341"/>
    </location>
</feature>
<feature type="region of interest" description="Disordered" evidence="1">
    <location>
        <begin position="125"/>
        <end position="146"/>
    </location>
</feature>
<feature type="sequence conflict" description="In Ref. 1; CAA04464." evidence="2" ref="1">
    <original>G</original>
    <variation>Y</variation>
    <location>
        <position position="286"/>
    </location>
</feature>
<reference key="1">
    <citation type="journal article" date="1998" name="J. Bacteriol.">
        <title>Cloning of the Lactococcus lactis adhE gene, encoding a multifunctional alcohol dehydrogenase, by complementation of a fermentative mutant of Escherichia coli.</title>
        <authorList>
            <person name="Arnau J."/>
            <person name="Jorgensen F."/>
            <person name="Madsen S.M."/>
            <person name="Vrang A."/>
            <person name="Israelsen H."/>
        </authorList>
    </citation>
    <scope>NUCLEOTIDE SEQUENCE [GENOMIC DNA]</scope>
</reference>
<reference key="2">
    <citation type="journal article" date="2007" name="J. Bacteriol.">
        <title>The complete genome sequence of the lactic acid bacterial paradigm Lactococcus lactis subsp. cremoris MG1363.</title>
        <authorList>
            <person name="Wegmann U."/>
            <person name="O'Connell-Motherway M."/>
            <person name="Zomer A."/>
            <person name="Buist G."/>
            <person name="Shearman C."/>
            <person name="Canchaya C."/>
            <person name="Ventura M."/>
            <person name="Goesmann A."/>
            <person name="Gasson M.J."/>
            <person name="Kuipers O.P."/>
            <person name="van Sinderen D."/>
            <person name="Kok J."/>
        </authorList>
    </citation>
    <scope>NUCLEOTIDE SEQUENCE [LARGE SCALE GENOMIC DNA]</scope>
    <source>
        <strain>MG1363</strain>
    </source>
</reference>
<organism>
    <name type="scientific">Lactococcus lactis subsp. cremoris (strain MG1363)</name>
    <dbReference type="NCBI Taxonomy" id="416870"/>
    <lineage>
        <taxon>Bacteria</taxon>
        <taxon>Bacillati</taxon>
        <taxon>Bacillota</taxon>
        <taxon>Bacilli</taxon>
        <taxon>Lactobacillales</taxon>
        <taxon>Streptococcaceae</taxon>
        <taxon>Lactococcus</taxon>
        <taxon>Lactococcus cremoris subsp. cremoris</taxon>
    </lineage>
</organism>
<name>Y2431_LACLM</name>
<sequence length="341" mass="37265">MKEKILLGGYTKRVSKGVYSVLLDSKKAELSALTEVAAVQNPTYITLDQKGHLYTCAADGNGGGIAAFDFDGQNTTHLGNVTSTGAPLCYVAVDEARQLVYGANYHLGEVRVYKIQADGSLRLTDTVKHNGSGPRPEQASSHVHYSDLTPDGRLVTCDLGTDEVTVYDVIGEGKLNIVTIYRAEKGMGARHISFHPNGKIAYLVGELNSTIEVLSYNEEKGRFARLQTISTLPEDYHGANGVAAIRISSDGKFLYASNRGHDSLAIYKVSPLGTKLESIGWTKTEGHIPRDFNFNKTEDYIIVAHQESDNLTLFLRDKNTGSLTLEQKDFYAPEITCVLPL</sequence>